<organism>
    <name type="scientific">Thermotoga sp. (strain RQ2)</name>
    <dbReference type="NCBI Taxonomy" id="126740"/>
    <lineage>
        <taxon>Bacteria</taxon>
        <taxon>Thermotogati</taxon>
        <taxon>Thermotogota</taxon>
        <taxon>Thermotogae</taxon>
        <taxon>Thermotogales</taxon>
        <taxon>Thermotogaceae</taxon>
        <taxon>Thermotoga</taxon>
    </lineage>
</organism>
<proteinExistence type="inferred from homology"/>
<protein>
    <recommendedName>
        <fullName evidence="1">Ribosomal protein uS12 methylthiotransferase RimO</fullName>
        <shortName evidence="1">uS12 MTTase</shortName>
        <shortName evidence="1">uS12 methylthiotransferase</shortName>
        <ecNumber evidence="1">2.8.4.4</ecNumber>
    </recommendedName>
    <alternativeName>
        <fullName evidence="1">Ribosomal protein uS12 (aspartate-C(3))-methylthiotransferase</fullName>
    </alternativeName>
    <alternativeName>
        <fullName evidence="1">Ribosome maturation factor RimO</fullName>
    </alternativeName>
</protein>
<reference key="1">
    <citation type="journal article" date="2011" name="J. Bacteriol.">
        <title>Genome sequence of Thermotoga sp. strain RQ2, a hyperthermophilic bacterium isolated from a geothermally heated region of the seafloor near Ribeira Quente, the Azores.</title>
        <authorList>
            <person name="Swithers K.S."/>
            <person name="DiPippo J.L."/>
            <person name="Bruce D.C."/>
            <person name="Detter C."/>
            <person name="Tapia R."/>
            <person name="Han S."/>
            <person name="Saunders E."/>
            <person name="Goodwin L.A."/>
            <person name="Han J."/>
            <person name="Woyke T."/>
            <person name="Pitluck S."/>
            <person name="Pennacchio L."/>
            <person name="Nolan M."/>
            <person name="Mikhailova N."/>
            <person name="Lykidis A."/>
            <person name="Land M.L."/>
            <person name="Brettin T."/>
            <person name="Stetter K.O."/>
            <person name="Nelson K.E."/>
            <person name="Gogarten J.P."/>
            <person name="Noll K.M."/>
        </authorList>
    </citation>
    <scope>NUCLEOTIDE SEQUENCE [LARGE SCALE GENOMIC DNA]</scope>
    <source>
        <strain>RQ2</strain>
    </source>
</reference>
<evidence type="ECO:0000255" key="1">
    <source>
        <dbReference type="HAMAP-Rule" id="MF_01865"/>
    </source>
</evidence>
<evidence type="ECO:0000255" key="2">
    <source>
        <dbReference type="PROSITE-ProRule" id="PRU01266"/>
    </source>
</evidence>
<keyword id="KW-0004">4Fe-4S</keyword>
<keyword id="KW-0963">Cytoplasm</keyword>
<keyword id="KW-0408">Iron</keyword>
<keyword id="KW-0411">Iron-sulfur</keyword>
<keyword id="KW-0479">Metal-binding</keyword>
<keyword id="KW-0949">S-adenosyl-L-methionine</keyword>
<keyword id="KW-0808">Transferase</keyword>
<feature type="chain" id="PRO_0000375054" description="Ribosomal protein uS12 methylthiotransferase RimO">
    <location>
        <begin position="1"/>
        <end position="430"/>
    </location>
</feature>
<feature type="domain" description="MTTase N-terminal" evidence="1">
    <location>
        <begin position="1"/>
        <end position="116"/>
    </location>
</feature>
<feature type="domain" description="Radical SAM core" evidence="2">
    <location>
        <begin position="134"/>
        <end position="365"/>
    </location>
</feature>
<feature type="domain" description="TRAM" evidence="1">
    <location>
        <begin position="367"/>
        <end position="430"/>
    </location>
</feature>
<feature type="binding site" evidence="1">
    <location>
        <position position="10"/>
    </location>
    <ligand>
        <name>[4Fe-4S] cluster</name>
        <dbReference type="ChEBI" id="CHEBI:49883"/>
        <label>1</label>
    </ligand>
</feature>
<feature type="binding site" evidence="1">
    <location>
        <position position="46"/>
    </location>
    <ligand>
        <name>[4Fe-4S] cluster</name>
        <dbReference type="ChEBI" id="CHEBI:49883"/>
        <label>1</label>
    </ligand>
</feature>
<feature type="binding site" evidence="1">
    <location>
        <position position="79"/>
    </location>
    <ligand>
        <name>[4Fe-4S] cluster</name>
        <dbReference type="ChEBI" id="CHEBI:49883"/>
        <label>1</label>
    </ligand>
</feature>
<feature type="binding site" evidence="1">
    <location>
        <position position="148"/>
    </location>
    <ligand>
        <name>[4Fe-4S] cluster</name>
        <dbReference type="ChEBI" id="CHEBI:49883"/>
        <label>2</label>
        <note>4Fe-4S-S-AdoMet</note>
    </ligand>
</feature>
<feature type="binding site" evidence="1">
    <location>
        <position position="152"/>
    </location>
    <ligand>
        <name>[4Fe-4S] cluster</name>
        <dbReference type="ChEBI" id="CHEBI:49883"/>
        <label>2</label>
        <note>4Fe-4S-S-AdoMet</note>
    </ligand>
</feature>
<feature type="binding site" evidence="1">
    <location>
        <position position="155"/>
    </location>
    <ligand>
        <name>[4Fe-4S] cluster</name>
        <dbReference type="ChEBI" id="CHEBI:49883"/>
        <label>2</label>
        <note>4Fe-4S-S-AdoMet</note>
    </ligand>
</feature>
<dbReference type="EC" id="2.8.4.4" evidence="1"/>
<dbReference type="EMBL" id="CP000969">
    <property type="protein sequence ID" value="ACB09308.1"/>
    <property type="molecule type" value="Genomic_DNA"/>
</dbReference>
<dbReference type="RefSeq" id="WP_012310842.1">
    <property type="nucleotide sequence ID" value="NC_010483.1"/>
</dbReference>
<dbReference type="SMR" id="B1LAG0"/>
<dbReference type="KEGG" id="trq:TRQ2_0957"/>
<dbReference type="HOGENOM" id="CLU_018697_0_1_0"/>
<dbReference type="Proteomes" id="UP000001687">
    <property type="component" value="Chromosome"/>
</dbReference>
<dbReference type="GO" id="GO:0005829">
    <property type="term" value="C:cytosol"/>
    <property type="evidence" value="ECO:0007669"/>
    <property type="project" value="TreeGrafter"/>
</dbReference>
<dbReference type="GO" id="GO:0051539">
    <property type="term" value="F:4 iron, 4 sulfur cluster binding"/>
    <property type="evidence" value="ECO:0007669"/>
    <property type="project" value="UniProtKB-UniRule"/>
</dbReference>
<dbReference type="GO" id="GO:0035599">
    <property type="term" value="F:aspartic acid methylthiotransferase activity"/>
    <property type="evidence" value="ECO:0007669"/>
    <property type="project" value="TreeGrafter"/>
</dbReference>
<dbReference type="GO" id="GO:0046872">
    <property type="term" value="F:metal ion binding"/>
    <property type="evidence" value="ECO:0007669"/>
    <property type="project" value="UniProtKB-KW"/>
</dbReference>
<dbReference type="GO" id="GO:0103039">
    <property type="term" value="F:protein methylthiotransferase activity"/>
    <property type="evidence" value="ECO:0007669"/>
    <property type="project" value="UniProtKB-EC"/>
</dbReference>
<dbReference type="GO" id="GO:0006400">
    <property type="term" value="P:tRNA modification"/>
    <property type="evidence" value="ECO:0007669"/>
    <property type="project" value="InterPro"/>
</dbReference>
<dbReference type="CDD" id="cd01335">
    <property type="entry name" value="Radical_SAM"/>
    <property type="match status" value="1"/>
</dbReference>
<dbReference type="FunFam" id="2.40.50.140:FF:000210">
    <property type="entry name" value="Ribosomal protein S12 methylthiotransferase RimO"/>
    <property type="match status" value="1"/>
</dbReference>
<dbReference type="FunFam" id="3.80.30.20:FF:000001">
    <property type="entry name" value="tRNA-2-methylthio-N(6)-dimethylallyladenosine synthase 2"/>
    <property type="match status" value="1"/>
</dbReference>
<dbReference type="Gene3D" id="3.40.50.12160">
    <property type="entry name" value="Methylthiotransferase, N-terminal domain"/>
    <property type="match status" value="1"/>
</dbReference>
<dbReference type="Gene3D" id="2.40.50.140">
    <property type="entry name" value="Nucleic acid-binding proteins"/>
    <property type="match status" value="1"/>
</dbReference>
<dbReference type="Gene3D" id="3.80.30.20">
    <property type="entry name" value="tm_1862 like domain"/>
    <property type="match status" value="1"/>
</dbReference>
<dbReference type="HAMAP" id="MF_01865">
    <property type="entry name" value="MTTase_RimO"/>
    <property type="match status" value="1"/>
</dbReference>
<dbReference type="InterPro" id="IPR006638">
    <property type="entry name" value="Elp3/MiaA/NifB-like_rSAM"/>
</dbReference>
<dbReference type="InterPro" id="IPR005839">
    <property type="entry name" value="Methylthiotransferase"/>
</dbReference>
<dbReference type="InterPro" id="IPR020612">
    <property type="entry name" value="Methylthiotransferase_CS"/>
</dbReference>
<dbReference type="InterPro" id="IPR013848">
    <property type="entry name" value="Methylthiotransferase_N"/>
</dbReference>
<dbReference type="InterPro" id="IPR038135">
    <property type="entry name" value="Methylthiotransferase_N_sf"/>
</dbReference>
<dbReference type="InterPro" id="IPR012340">
    <property type="entry name" value="NA-bd_OB-fold"/>
</dbReference>
<dbReference type="InterPro" id="IPR005840">
    <property type="entry name" value="Ribosomal_uS12_MeSTrfase_RimO"/>
</dbReference>
<dbReference type="InterPro" id="IPR007197">
    <property type="entry name" value="rSAM"/>
</dbReference>
<dbReference type="InterPro" id="IPR023404">
    <property type="entry name" value="rSAM_horseshoe"/>
</dbReference>
<dbReference type="InterPro" id="IPR002792">
    <property type="entry name" value="TRAM_dom"/>
</dbReference>
<dbReference type="NCBIfam" id="TIGR01125">
    <property type="entry name" value="30S ribosomal protein S12 methylthiotransferase RimO"/>
    <property type="match status" value="1"/>
</dbReference>
<dbReference type="NCBIfam" id="TIGR00089">
    <property type="entry name" value="MiaB/RimO family radical SAM methylthiotransferase"/>
    <property type="match status" value="1"/>
</dbReference>
<dbReference type="PANTHER" id="PTHR43837">
    <property type="entry name" value="RIBOSOMAL PROTEIN S12 METHYLTHIOTRANSFERASE RIMO"/>
    <property type="match status" value="1"/>
</dbReference>
<dbReference type="PANTHER" id="PTHR43837:SF1">
    <property type="entry name" value="RIBOSOMAL PROTEIN US12 METHYLTHIOTRANSFERASE RIMO"/>
    <property type="match status" value="1"/>
</dbReference>
<dbReference type="Pfam" id="PF04055">
    <property type="entry name" value="Radical_SAM"/>
    <property type="match status" value="1"/>
</dbReference>
<dbReference type="Pfam" id="PF18693">
    <property type="entry name" value="TRAM_2"/>
    <property type="match status" value="1"/>
</dbReference>
<dbReference type="Pfam" id="PF00919">
    <property type="entry name" value="UPF0004"/>
    <property type="match status" value="1"/>
</dbReference>
<dbReference type="SFLD" id="SFLDG01082">
    <property type="entry name" value="B12-binding_domain_containing"/>
    <property type="match status" value="1"/>
</dbReference>
<dbReference type="SFLD" id="SFLDG01061">
    <property type="entry name" value="methylthiotransferase"/>
    <property type="match status" value="1"/>
</dbReference>
<dbReference type="SFLD" id="SFLDF00274">
    <property type="entry name" value="ribosomal_protein_S12_methylth"/>
    <property type="match status" value="1"/>
</dbReference>
<dbReference type="SMART" id="SM00729">
    <property type="entry name" value="Elp3"/>
    <property type="match status" value="1"/>
</dbReference>
<dbReference type="SUPFAM" id="SSF102114">
    <property type="entry name" value="Radical SAM enzymes"/>
    <property type="match status" value="1"/>
</dbReference>
<dbReference type="PROSITE" id="PS51449">
    <property type="entry name" value="MTTASE_N"/>
    <property type="match status" value="1"/>
</dbReference>
<dbReference type="PROSITE" id="PS01278">
    <property type="entry name" value="MTTASE_RADICAL"/>
    <property type="match status" value="1"/>
</dbReference>
<dbReference type="PROSITE" id="PS51918">
    <property type="entry name" value="RADICAL_SAM"/>
    <property type="match status" value="1"/>
</dbReference>
<dbReference type="PROSITE" id="PS50926">
    <property type="entry name" value="TRAM"/>
    <property type="match status" value="1"/>
</dbReference>
<sequence length="430" mass="49456">MRVGIKVLGCPKNEADCEILAGVLRERGHEIVFDVKDADVVVLDTCAFIEDAKRESIDEIFSFIDAKDQYSYKLVVKGCLVQRYYEELKKEIPEVDQWIGVVDPEEIANALEKGTDLVPNRPETVYRYRKRIDLEERPYAYVKISDGCDRGCTFCSIPSFKGSLRSRSIEDITHEVEDLLKEGKKEIILVAQDTTSYGIDLYRKQALPDLLRRLNSLNGEFWIRVMYLHPDHLTEEIISAMLELDKVVKYFDVPVQHGSDKILKLMGRTKSSEELKKMLSSIRERFPDAVLRTSIIVGFPGETEEDFEELKRFVEEIQFDKLGAFVYSDEEGTVAFNLKEKVDPEVAKRRQEELLLLQAEISNSRLDRFIGRKLKFLVEGKEGKFLVGRTWTEAPEVDGVVFVRGKGKIGDFLEVVIKEHDEYDMWGSVT</sequence>
<name>RIMO_THESQ</name>
<gene>
    <name evidence="1" type="primary">rimO</name>
    <name type="ordered locus">TRQ2_0957</name>
</gene>
<accession>B1LAG0</accession>
<comment type="function">
    <text evidence="1">Catalyzes the methylthiolation of an aspartic acid residue of ribosomal protein uS12.</text>
</comment>
<comment type="catalytic activity">
    <reaction evidence="1">
        <text>L-aspartate(89)-[ribosomal protein uS12]-hydrogen + (sulfur carrier)-SH + AH2 + 2 S-adenosyl-L-methionine = 3-methylsulfanyl-L-aspartate(89)-[ribosomal protein uS12]-hydrogen + (sulfur carrier)-H + 5'-deoxyadenosine + L-methionine + A + S-adenosyl-L-homocysteine + 2 H(+)</text>
        <dbReference type="Rhea" id="RHEA:37087"/>
        <dbReference type="Rhea" id="RHEA-COMP:10460"/>
        <dbReference type="Rhea" id="RHEA-COMP:10461"/>
        <dbReference type="Rhea" id="RHEA-COMP:14737"/>
        <dbReference type="Rhea" id="RHEA-COMP:14739"/>
        <dbReference type="ChEBI" id="CHEBI:13193"/>
        <dbReference type="ChEBI" id="CHEBI:15378"/>
        <dbReference type="ChEBI" id="CHEBI:17319"/>
        <dbReference type="ChEBI" id="CHEBI:17499"/>
        <dbReference type="ChEBI" id="CHEBI:29917"/>
        <dbReference type="ChEBI" id="CHEBI:29961"/>
        <dbReference type="ChEBI" id="CHEBI:57844"/>
        <dbReference type="ChEBI" id="CHEBI:57856"/>
        <dbReference type="ChEBI" id="CHEBI:59789"/>
        <dbReference type="ChEBI" id="CHEBI:64428"/>
        <dbReference type="ChEBI" id="CHEBI:73599"/>
        <dbReference type="EC" id="2.8.4.4"/>
    </reaction>
</comment>
<comment type="cofactor">
    <cofactor evidence="1">
        <name>[4Fe-4S] cluster</name>
        <dbReference type="ChEBI" id="CHEBI:49883"/>
    </cofactor>
    <text evidence="1">Binds 2 [4Fe-4S] clusters. One cluster is coordinated with 3 cysteines and an exchangeable S-adenosyl-L-methionine.</text>
</comment>
<comment type="subcellular location">
    <subcellularLocation>
        <location evidence="1">Cytoplasm</location>
    </subcellularLocation>
</comment>
<comment type="similarity">
    <text evidence="1">Belongs to the methylthiotransferase family. RimO subfamily.</text>
</comment>